<gene>
    <name evidence="1" type="primary">pdxJ</name>
    <name type="ordered locus">Amuc_1207</name>
</gene>
<keyword id="KW-0963">Cytoplasm</keyword>
<keyword id="KW-0664">Pyridoxine biosynthesis</keyword>
<keyword id="KW-1185">Reference proteome</keyword>
<keyword id="KW-0808">Transferase</keyword>
<organism>
    <name type="scientific">Akkermansia muciniphila (strain ATCC BAA-835 / DSM 22959 / JCM 33894 / BCRC 81048 / CCUG 64013 / CIP 107961 / Muc)</name>
    <dbReference type="NCBI Taxonomy" id="349741"/>
    <lineage>
        <taxon>Bacteria</taxon>
        <taxon>Pseudomonadati</taxon>
        <taxon>Verrucomicrobiota</taxon>
        <taxon>Verrucomicrobiia</taxon>
        <taxon>Verrucomicrobiales</taxon>
        <taxon>Akkermansiaceae</taxon>
        <taxon>Akkermansia</taxon>
    </lineage>
</organism>
<reference key="1">
    <citation type="journal article" date="2011" name="PLoS ONE">
        <title>The genome of Akkermansia muciniphila, a dedicated intestinal mucin degrader, and its use in exploring intestinal metagenomes.</title>
        <authorList>
            <person name="van Passel M.W."/>
            <person name="Kant R."/>
            <person name="Zoetendal E.G."/>
            <person name="Plugge C.M."/>
            <person name="Derrien M."/>
            <person name="Malfatti S.A."/>
            <person name="Chain P.S."/>
            <person name="Woyke T."/>
            <person name="Palva A."/>
            <person name="de Vos W.M."/>
            <person name="Smidt H."/>
        </authorList>
    </citation>
    <scope>NUCLEOTIDE SEQUENCE [LARGE SCALE GENOMIC DNA]</scope>
    <source>
        <strain>ATCC BAA-835 / DSM 22959 / JCM 33894 / BCRC 81048 / CCUG 64013 / CIP 107961 / Muc</strain>
    </source>
</reference>
<accession>B2URE7</accession>
<feature type="chain" id="PRO_1000132544" description="Pyridoxine 5'-phosphate synthase">
    <location>
        <begin position="1"/>
        <end position="246"/>
    </location>
</feature>
<feature type="active site" description="Proton acceptor" evidence="1">
    <location>
        <position position="49"/>
    </location>
</feature>
<feature type="active site" description="Proton acceptor" evidence="1">
    <location>
        <position position="76"/>
    </location>
</feature>
<feature type="active site" description="Proton donor" evidence="1">
    <location>
        <position position="196"/>
    </location>
</feature>
<feature type="binding site" evidence="1">
    <location>
        <position position="6"/>
    </location>
    <ligand>
        <name>3-amino-2-oxopropyl phosphate</name>
        <dbReference type="ChEBI" id="CHEBI:57279"/>
    </ligand>
</feature>
<feature type="binding site" evidence="1">
    <location>
        <begin position="8"/>
        <end position="9"/>
    </location>
    <ligand>
        <name>1-deoxy-D-xylulose 5-phosphate</name>
        <dbReference type="ChEBI" id="CHEBI:57792"/>
    </ligand>
</feature>
<feature type="binding site" evidence="1">
    <location>
        <position position="17"/>
    </location>
    <ligand>
        <name>3-amino-2-oxopropyl phosphate</name>
        <dbReference type="ChEBI" id="CHEBI:57279"/>
    </ligand>
</feature>
<feature type="binding site" evidence="1">
    <location>
        <position position="51"/>
    </location>
    <ligand>
        <name>1-deoxy-D-xylulose 5-phosphate</name>
        <dbReference type="ChEBI" id="CHEBI:57792"/>
    </ligand>
</feature>
<feature type="binding site" evidence="1">
    <location>
        <position position="56"/>
    </location>
    <ligand>
        <name>1-deoxy-D-xylulose 5-phosphate</name>
        <dbReference type="ChEBI" id="CHEBI:57792"/>
    </ligand>
</feature>
<feature type="binding site" evidence="1">
    <location>
        <position position="106"/>
    </location>
    <ligand>
        <name>1-deoxy-D-xylulose 5-phosphate</name>
        <dbReference type="ChEBI" id="CHEBI:57792"/>
    </ligand>
</feature>
<feature type="binding site" evidence="1">
    <location>
        <position position="197"/>
    </location>
    <ligand>
        <name>3-amino-2-oxopropyl phosphate</name>
        <dbReference type="ChEBI" id="CHEBI:57279"/>
    </ligand>
</feature>
<feature type="binding site" evidence="1">
    <location>
        <begin position="219"/>
        <end position="220"/>
    </location>
    <ligand>
        <name>3-amino-2-oxopropyl phosphate</name>
        <dbReference type="ChEBI" id="CHEBI:57279"/>
    </ligand>
</feature>
<feature type="site" description="Transition state stabilizer" evidence="1">
    <location>
        <position position="157"/>
    </location>
</feature>
<name>PDXJ_AKKM8</name>
<protein>
    <recommendedName>
        <fullName evidence="1">Pyridoxine 5'-phosphate synthase</fullName>
        <shortName evidence="1">PNP synthase</shortName>
        <ecNumber evidence="1">2.6.99.2</ecNumber>
    </recommendedName>
</protein>
<evidence type="ECO:0000255" key="1">
    <source>
        <dbReference type="HAMAP-Rule" id="MF_00279"/>
    </source>
</evidence>
<proteinExistence type="inferred from homology"/>
<sequence>MLLGVNIDHIATLRQARYATMLDSFNVEPSVLDAAYAAQRGGADSITLHVRGDRRHMQDADALSVRESVALPLNLEMGNTPEMVDFALRLKPDYICMVPEKREEITTEGGLDAVFHEKDLAPTMARMADNGIQVSLFIDPEVPQVEAAARLGAPMIELHTGCFANHSGRERTEELARLKRAAELAHSLGIQVNAGHGINYQNLEQLLAGVPYLHELNIGHTIVSRALFVGMEQAVREMRQAIDRLS</sequence>
<dbReference type="EC" id="2.6.99.2" evidence="1"/>
<dbReference type="EMBL" id="CP001071">
    <property type="protein sequence ID" value="ACD05032.1"/>
    <property type="molecule type" value="Genomic_DNA"/>
</dbReference>
<dbReference type="RefSeq" id="WP_012420247.1">
    <property type="nucleotide sequence ID" value="NZ_CP071807.1"/>
</dbReference>
<dbReference type="SMR" id="B2URE7"/>
<dbReference type="STRING" id="349741.Amuc_1207"/>
<dbReference type="PaxDb" id="349741-Amuc_1207"/>
<dbReference type="KEGG" id="amu:Amuc_1207"/>
<dbReference type="eggNOG" id="COG0854">
    <property type="taxonomic scope" value="Bacteria"/>
</dbReference>
<dbReference type="HOGENOM" id="CLU_074563_0_0_0"/>
<dbReference type="OrthoDB" id="9806590at2"/>
<dbReference type="BioCyc" id="AMUC349741:G1GBX-1285-MONOMER"/>
<dbReference type="UniPathway" id="UPA00244">
    <property type="reaction ID" value="UER00313"/>
</dbReference>
<dbReference type="Proteomes" id="UP000001031">
    <property type="component" value="Chromosome"/>
</dbReference>
<dbReference type="GO" id="GO:0005829">
    <property type="term" value="C:cytosol"/>
    <property type="evidence" value="ECO:0007669"/>
    <property type="project" value="TreeGrafter"/>
</dbReference>
<dbReference type="GO" id="GO:0033856">
    <property type="term" value="F:pyridoxine 5'-phosphate synthase activity"/>
    <property type="evidence" value="ECO:0007669"/>
    <property type="project" value="UniProtKB-EC"/>
</dbReference>
<dbReference type="GO" id="GO:0008615">
    <property type="term" value="P:pyridoxine biosynthetic process"/>
    <property type="evidence" value="ECO:0007669"/>
    <property type="project" value="UniProtKB-UniRule"/>
</dbReference>
<dbReference type="CDD" id="cd00003">
    <property type="entry name" value="PNPsynthase"/>
    <property type="match status" value="1"/>
</dbReference>
<dbReference type="Gene3D" id="3.20.20.70">
    <property type="entry name" value="Aldolase class I"/>
    <property type="match status" value="1"/>
</dbReference>
<dbReference type="HAMAP" id="MF_00279">
    <property type="entry name" value="PdxJ"/>
    <property type="match status" value="1"/>
</dbReference>
<dbReference type="InterPro" id="IPR013785">
    <property type="entry name" value="Aldolase_TIM"/>
</dbReference>
<dbReference type="InterPro" id="IPR004569">
    <property type="entry name" value="PyrdxlP_synth_PdxJ"/>
</dbReference>
<dbReference type="InterPro" id="IPR036130">
    <property type="entry name" value="Pyridoxine-5'_phos_synth"/>
</dbReference>
<dbReference type="NCBIfam" id="TIGR00559">
    <property type="entry name" value="pdxJ"/>
    <property type="match status" value="1"/>
</dbReference>
<dbReference type="NCBIfam" id="NF003625">
    <property type="entry name" value="PRK05265.1-3"/>
    <property type="match status" value="1"/>
</dbReference>
<dbReference type="NCBIfam" id="NF003627">
    <property type="entry name" value="PRK05265.1-5"/>
    <property type="match status" value="1"/>
</dbReference>
<dbReference type="PANTHER" id="PTHR30456">
    <property type="entry name" value="PYRIDOXINE 5'-PHOSPHATE SYNTHASE"/>
    <property type="match status" value="1"/>
</dbReference>
<dbReference type="PANTHER" id="PTHR30456:SF0">
    <property type="entry name" value="PYRIDOXINE 5'-PHOSPHATE SYNTHASE"/>
    <property type="match status" value="1"/>
</dbReference>
<dbReference type="Pfam" id="PF03740">
    <property type="entry name" value="PdxJ"/>
    <property type="match status" value="1"/>
</dbReference>
<dbReference type="SUPFAM" id="SSF63892">
    <property type="entry name" value="Pyridoxine 5'-phosphate synthase"/>
    <property type="match status" value="1"/>
</dbReference>
<comment type="function">
    <text evidence="1">Catalyzes the complicated ring closure reaction between the two acyclic compounds 1-deoxy-D-xylulose-5-phosphate (DXP) and 3-amino-2-oxopropyl phosphate (1-amino-acetone-3-phosphate or AAP) to form pyridoxine 5'-phosphate (PNP) and inorganic phosphate.</text>
</comment>
<comment type="catalytic activity">
    <reaction evidence="1">
        <text>3-amino-2-oxopropyl phosphate + 1-deoxy-D-xylulose 5-phosphate = pyridoxine 5'-phosphate + phosphate + 2 H2O + H(+)</text>
        <dbReference type="Rhea" id="RHEA:15265"/>
        <dbReference type="ChEBI" id="CHEBI:15377"/>
        <dbReference type="ChEBI" id="CHEBI:15378"/>
        <dbReference type="ChEBI" id="CHEBI:43474"/>
        <dbReference type="ChEBI" id="CHEBI:57279"/>
        <dbReference type="ChEBI" id="CHEBI:57792"/>
        <dbReference type="ChEBI" id="CHEBI:58589"/>
        <dbReference type="EC" id="2.6.99.2"/>
    </reaction>
</comment>
<comment type="pathway">
    <text evidence="1">Cofactor biosynthesis; pyridoxine 5'-phosphate biosynthesis; pyridoxine 5'-phosphate from D-erythrose 4-phosphate: step 5/5.</text>
</comment>
<comment type="subunit">
    <text evidence="1">Homooctamer; tetramer of dimers.</text>
</comment>
<comment type="subcellular location">
    <subcellularLocation>
        <location evidence="1">Cytoplasm</location>
    </subcellularLocation>
</comment>
<comment type="similarity">
    <text evidence="1">Belongs to the PNP synthase family.</text>
</comment>